<proteinExistence type="evidence at protein level"/>
<sequence>MTAYSGSPSKPGNNNSYLNRYVENLGTNVTPPLRPQSSSKINSSLNIASPSHLKTKTSASNSSATILSKKVESSVSKLKPSLPNKLVGKYTVDLSNYSKIELRYYEFLCRVSEVKIWIEAVIEEALPSEIELCVGDSLRNGVFLAKLTQRINPDLTTVIFPAGDKLQFKHTQNINAFFGLVEHVGVPDSFRFELQDLYNKKNIPQVFETLHILISMINKKWPGKTPALTNVSGQISFTKEEIAACKKAWPRIRDFKSLGTNINTAPASPEEPKEKRSGLIKDFNKFERPNIPVEEILITPRKNITDANCSDFSNTPSPYNEAPKMSNLDVVVEKRKFTPIEPSLLGPTPSLEYSPIKNKSLSYYSPTISKYLTYDTEFYTRRSRAREEDLNYYQTFKYSPSHYSPMRRERMTEEQFLEKVVQLQNICRGVNTRFNLYIQKRLLNLFEQDILRFQACLRGNKFRVLSSMYLPIRRAKIDVPHVEAIQSRIKGSRIRYKYDKLKFTLSRFSCTVELLQAYCRSKLLKTTVNTKLNDIEISHYPLTKLQSYMRASYVRKKVMSLNTKLNDERESIMKFSAIIRGNVVRCSEDAILSAVHDVHKENISKLQSLIRGIFTRSCLASIIYSLGKENCNIIQLSACIRGNAVRHKVQSLFAPENNLSETVHDLQGLVRGILVRYTLDLVDDIVEYNNLALFQAFSRGALVRESLDQKSSFYKRNVRSVIMIQSWIRKSLQRSAYLELLDCPNPSLWAVKKFVHLLNGTATIEEVQNQLESCQASLDSENMKKERLLKSIRQQLNINGVLDKFGLLKDKDHELGISDSTIPKSKYQKYEKLFYMLQVDPSYWKLLYLKEPEFVAKNVYMTFGTVNQRMNDRERSYFTRFVCEMLQNAINEAPSIESFLDNRSQFWQTILQDFLRRESPEFFSIIVPVLDYLSDPVVDFESDPYKIYQEIHGFSSPQHCSPVDDASTKNKFIDNLRCLWHAIEMVAEIYTRKVHTIPVEIRYLCTKIFCYAADKNIEEIDSLRAISSILVNVFVSEYLVNREYYGYKDSNVQKNNQKIDILMKSLATVFEIKNFDGFLDPLNQYANEIKPHIKDVLYNVLVDPEYEQEGDRLIYLDMVSPSPKLELLTEKVLEISGKFEEYLNEFPEADILHDILEKNLDNSSFPRSGRVTLELDASAYRFLVSDDKMRKIYDQVKRAFVYMMQIEDVDTNLYDLSISTILPQDEPNFANFLEQNPKIRDDPMIQKLKPLKYFTLKNVTLKKIHELESTGTFCSSDNKLQNFLNDIANTIKNPNYAIDYVTQEIYITKETLTKISEMNHSLDIELSRLKKHVDHTIKDFQKAKDFSPVHKSKFGNFKNAVKKVQGRERSELQGMKFKWNTKQLYERGVLKTIRGEKLAELTVKVFGSSGPKFPDIIFKISTSDGSRFGIQMIDKRKGPDKRYSDDVDSFSFKDLIKTQVEPKIETWKLFHSNVVVNNSQLLHLIVSFFYKRNAL</sequence>
<gene>
    <name type="primary">IQG1</name>
    <name type="synonym">CYK1</name>
    <name type="ordered locus">YPL242C</name>
</gene>
<comment type="function">
    <text evidence="9 10 11 13">Required for the assembly and the contraction of the actomyosin ring at the bud neck during cytokinesis. Seems to be involved in additional tasks during cell division like axial bud-site selection and targeted secretion by recruiting the spatial landmark BUD4, the septin CDC12 and the secretion landmark SEC3 to the bud neck. May be regulated by calcium ions.</text>
</comment>
<comment type="subunit">
    <text evidence="5 6 9 12 13">Interacts with AFR1 (PubMed:9679143). Interacts with AKR1 (PubMed:9679143). Interacts with activated CDC42 (PubMed:9679143). Interacts with calmodulin CMD1 (PubMed:9950677). Interacts with myosin MYO1 and its light chain MLC1 (PubMed:11082046). Interacts with BUD4 (PubMed:12446742). Interacts with INN1 (PubMed:18344988). Interacts with SEC3 (PubMed:12446742). Interacts with TEM1 (PubMed:9950677).</text>
</comment>
<comment type="interaction">
    <interactant intactId="EBI-35351">
        <id>Q12280</id>
    </interactant>
    <interactant intactId="EBI-3848">
        <id>P47136</id>
        <label>BUD4</label>
    </interactant>
    <organismsDiffer>false</organismsDiffer>
    <experiments>4</experiments>
</comment>
<comment type="interaction">
    <interactant intactId="EBI-35351">
        <id>Q12280</id>
    </interactant>
    <interactant intactId="EBI-10988">
        <id>P53141</id>
        <label>MLC1</label>
    </interactant>
    <organismsDiffer>false</organismsDiffer>
    <experiments>13</experiments>
</comment>
<comment type="subcellular location">
    <subcellularLocation>
        <location evidence="7 9 11">Bud neck</location>
    </subcellularLocation>
    <text>Forms a ring at the bud neck in a MLC1-dependent manner, which contracts at the end of cytokinesis.</text>
</comment>
<comment type="domain">
    <text evidence="1">The calponin homology (CH) domain binds to actin filaments and is required for their recruitment to the bud neck.</text>
</comment>
<comment type="domain">
    <text evidence="5">The IQ domains provide the interaction surface for the myosin light chain MLC1.</text>
</comment>
<comment type="domain">
    <text>The Ras-GAP domain is required for contraction of the actomyosin ring and is needed for the interaction with TEM1. It probably does not stimulate GTPase activity.</text>
</comment>
<comment type="miscellaneous">
    <text evidence="8">Present with 279 molecules/cell in log phase SD medium.</text>
</comment>
<protein>
    <recommendedName>
        <fullName>Ras GTPase-activating-like protein IQG1</fullName>
    </recommendedName>
    <alternativeName>
        <fullName>Cytokinesis protein 1</fullName>
    </alternativeName>
    <alternativeName>
        <fullName>IQGAP-related protein 1</fullName>
    </alternativeName>
</protein>
<feature type="chain" id="PRO_0000056652" description="Ras GTPase-activating-like protein IQG1">
    <location>
        <begin position="1"/>
        <end position="1495"/>
    </location>
</feature>
<feature type="domain" description="Calponin-homology (CH)" evidence="3">
    <location>
        <begin position="108"/>
        <end position="221"/>
    </location>
</feature>
<feature type="domain" description="IQ 1">
    <location>
        <begin position="447"/>
        <end position="467"/>
    </location>
</feature>
<feature type="domain" description="IQ 2">
    <location>
        <begin position="538"/>
        <end position="567"/>
    </location>
</feature>
<feature type="domain" description="IQ 3">
    <location>
        <begin position="568"/>
        <end position="597"/>
    </location>
</feature>
<feature type="domain" description="IQ 4">
    <location>
        <begin position="599"/>
        <end position="628"/>
    </location>
</feature>
<feature type="domain" description="IQ 5">
    <location>
        <begin position="629"/>
        <end position="658"/>
    </location>
</feature>
<feature type="domain" description="IQ 6">
    <location>
        <begin position="687"/>
        <end position="716"/>
    </location>
</feature>
<feature type="domain" description="IQ 7">
    <location>
        <begin position="717"/>
        <end position="746"/>
    </location>
</feature>
<feature type="domain" description="Ras-GAP" evidence="4">
    <location>
        <begin position="876"/>
        <end position="1100"/>
    </location>
</feature>
<feature type="coiled-coil region" evidence="2">
    <location>
        <begin position="759"/>
        <end position="798"/>
    </location>
</feature>
<feature type="modified residue" description="Phosphothreonine" evidence="14">
    <location>
        <position position="264"/>
    </location>
</feature>
<feature type="modified residue" description="Phosphoserine" evidence="14">
    <location>
        <position position="268"/>
    </location>
</feature>
<feature type="modified residue" description="Phosphothreonine" evidence="14">
    <location>
        <position position="299"/>
    </location>
</feature>
<feature type="mutagenesis site" description="In IQG1-1; causes a defect in cytokinesis at 37 degrees Celsius." evidence="5">
    <original>L</original>
    <variation>P</variation>
    <location>
        <position position="457"/>
    </location>
</feature>
<keyword id="KW-0009">Actin-binding</keyword>
<keyword id="KW-0131">Cell cycle</keyword>
<keyword id="KW-0132">Cell division</keyword>
<keyword id="KW-0175">Coiled coil</keyword>
<keyword id="KW-0597">Phosphoprotein</keyword>
<keyword id="KW-1185">Reference proteome</keyword>
<keyword id="KW-0677">Repeat</keyword>
<accession>Q12280</accession>
<accession>D6W3C9</accession>
<reference key="1">
    <citation type="journal article" date="1998" name="J. Cell Biol.">
        <title>Iqg1p, a yeast homologue of the mammalian IQGAPs, mediates cdc42p effects on the actin cytoskeleton.</title>
        <authorList>
            <person name="Osman M.A."/>
            <person name="Cerione R.A."/>
        </authorList>
    </citation>
    <scope>NUCLEOTIDE SEQUENCE [GENOMIC DNA]</scope>
    <scope>INTERACTION WITH AFR1; AKR1 AND CDC42</scope>
    <source>
        <strain>CUY30</strain>
    </source>
</reference>
<reference key="2">
    <citation type="journal article" date="1997" name="Nature">
        <title>The nucleotide sequence of Saccharomyces cerevisiae chromosome XVI.</title>
        <authorList>
            <person name="Bussey H."/>
            <person name="Storms R.K."/>
            <person name="Ahmed A."/>
            <person name="Albermann K."/>
            <person name="Allen E."/>
            <person name="Ansorge W."/>
            <person name="Araujo R."/>
            <person name="Aparicio A."/>
            <person name="Barrell B.G."/>
            <person name="Badcock K."/>
            <person name="Benes V."/>
            <person name="Botstein D."/>
            <person name="Bowman S."/>
            <person name="Brueckner M."/>
            <person name="Carpenter J."/>
            <person name="Cherry J.M."/>
            <person name="Chung E."/>
            <person name="Churcher C.M."/>
            <person name="Coster F."/>
            <person name="Davis K."/>
            <person name="Davis R.W."/>
            <person name="Dietrich F.S."/>
            <person name="Delius H."/>
            <person name="DiPaolo T."/>
            <person name="Dubois E."/>
            <person name="Duesterhoeft A."/>
            <person name="Duncan M."/>
            <person name="Floeth M."/>
            <person name="Fortin N."/>
            <person name="Friesen J.D."/>
            <person name="Fritz C."/>
            <person name="Goffeau A."/>
            <person name="Hall J."/>
            <person name="Hebling U."/>
            <person name="Heumann K."/>
            <person name="Hilbert H."/>
            <person name="Hillier L.W."/>
            <person name="Hunicke-Smith S."/>
            <person name="Hyman R.W."/>
            <person name="Johnston M."/>
            <person name="Kalman S."/>
            <person name="Kleine K."/>
            <person name="Komp C."/>
            <person name="Kurdi O."/>
            <person name="Lashkari D."/>
            <person name="Lew H."/>
            <person name="Lin A."/>
            <person name="Lin D."/>
            <person name="Louis E.J."/>
            <person name="Marathe R."/>
            <person name="Messenguy F."/>
            <person name="Mewes H.-W."/>
            <person name="Mirtipati S."/>
            <person name="Moestl D."/>
            <person name="Mueller-Auer S."/>
            <person name="Namath A."/>
            <person name="Nentwich U."/>
            <person name="Oefner P."/>
            <person name="Pearson D."/>
            <person name="Petel F.X."/>
            <person name="Pohl T.M."/>
            <person name="Purnelle B."/>
            <person name="Rajandream M.A."/>
            <person name="Rechmann S."/>
            <person name="Rieger M."/>
            <person name="Riles L."/>
            <person name="Roberts D."/>
            <person name="Schaefer M."/>
            <person name="Scharfe M."/>
            <person name="Scherens B."/>
            <person name="Schramm S."/>
            <person name="Schroeder M."/>
            <person name="Sdicu A.-M."/>
            <person name="Tettelin H."/>
            <person name="Urrestarazu L.A."/>
            <person name="Ushinsky S."/>
            <person name="Vierendeels F."/>
            <person name="Vissers S."/>
            <person name="Voss H."/>
            <person name="Walsh S.V."/>
            <person name="Wambutt R."/>
            <person name="Wang Y."/>
            <person name="Wedler E."/>
            <person name="Wedler H."/>
            <person name="Winnett E."/>
            <person name="Zhong W.-W."/>
            <person name="Zollner A."/>
            <person name="Vo D.H."/>
            <person name="Hani J."/>
        </authorList>
    </citation>
    <scope>NUCLEOTIDE SEQUENCE [LARGE SCALE GENOMIC DNA]</scope>
    <source>
        <strain>ATCC 204508 / S288c</strain>
    </source>
</reference>
<reference key="3">
    <citation type="journal article" date="2014" name="G3 (Bethesda)">
        <title>The reference genome sequence of Saccharomyces cerevisiae: Then and now.</title>
        <authorList>
            <person name="Engel S.R."/>
            <person name="Dietrich F.S."/>
            <person name="Fisk D.G."/>
            <person name="Binkley G."/>
            <person name="Balakrishnan R."/>
            <person name="Costanzo M.C."/>
            <person name="Dwight S.S."/>
            <person name="Hitz B.C."/>
            <person name="Karra K."/>
            <person name="Nash R.S."/>
            <person name="Weng S."/>
            <person name="Wong E.D."/>
            <person name="Lloyd P."/>
            <person name="Skrzypek M.S."/>
            <person name="Miyasato S.R."/>
            <person name="Simison M."/>
            <person name="Cherry J.M."/>
        </authorList>
    </citation>
    <scope>GENOME REANNOTATION</scope>
    <source>
        <strain>ATCC 204508 / S288c</strain>
    </source>
</reference>
<reference key="4">
    <citation type="journal article" date="1997" name="Curr. Biol.">
        <title>An IQGAP-related protein controls actin-ring formation and cytokinesis in yeast.</title>
        <authorList>
            <person name="Epp J.A."/>
            <person name="Chant J."/>
        </authorList>
    </citation>
    <scope>FUNCTION</scope>
</reference>
<reference key="5">
    <citation type="journal article" date="1998" name="J. Cell Biol.">
        <title>Sequential assembly of myosin II, an IQGAP-like protein, and filamentous actin to a ring structure involved in budding yeast cytokinesis.</title>
        <authorList>
            <person name="Lippincott J."/>
            <person name="Li R."/>
        </authorList>
    </citation>
    <scope>FUNCTION</scope>
    <scope>SUBCELLULAR LOCATION</scope>
</reference>
<reference key="6">
    <citation type="journal article" date="1999" name="Mol. Biol. Cell">
        <title>The multiple roles of Cyk1p in the assembly and function of the actomyosin ring in budding yeast.</title>
        <authorList>
            <person name="Shannon K.B."/>
            <person name="Li R."/>
        </authorList>
    </citation>
    <scope>FUNCTION</scope>
    <scope>INTERACTION WITH CMD1 AND TEM1</scope>
</reference>
<reference key="7">
    <citation type="journal article" date="2000" name="J. Cell Sci.">
        <title>Yeast myosin light chain, Mlc1p, interacts with both IQGAP and class II myosin to effect cytokinesis.</title>
        <authorList>
            <person name="Boyne J.R."/>
            <person name="Yosuf H.M."/>
            <person name="Bieganowski P."/>
            <person name="Brenner C."/>
            <person name="Price C."/>
        </authorList>
    </citation>
    <scope>INTERACTION WITH MLC1 AND MYO1</scope>
    <scope>MUTAGENESIS OF LEU-457</scope>
</reference>
<reference key="8">
    <citation type="journal article" date="2002" name="J. Cell Biol.">
        <title>Iqg1p links spatial and secretion landmarks to polarity and cytokinesis.</title>
        <authorList>
            <person name="Osman M.A."/>
            <person name="Konopka J.B."/>
            <person name="Cerione R.A."/>
        </authorList>
    </citation>
    <scope>INTERACTION WITH BUD4 AND SEC3</scope>
</reference>
<reference key="9">
    <citation type="journal article" date="2003" name="Nature">
        <title>Global analysis of protein localization in budding yeast.</title>
        <authorList>
            <person name="Huh W.-K."/>
            <person name="Falvo J.V."/>
            <person name="Gerke L.C."/>
            <person name="Carroll A.S."/>
            <person name="Howson R.W."/>
            <person name="Weissman J.S."/>
            <person name="O'Shea E.K."/>
        </authorList>
    </citation>
    <scope>SUBCELLULAR LOCATION [LARGE SCALE ANALYSIS]</scope>
</reference>
<reference key="10">
    <citation type="journal article" date="2003" name="Nature">
        <title>Global analysis of protein expression in yeast.</title>
        <authorList>
            <person name="Ghaemmaghami S."/>
            <person name="Huh W.-K."/>
            <person name="Bower K."/>
            <person name="Howson R.W."/>
            <person name="Belle A."/>
            <person name="Dephoure N."/>
            <person name="O'Shea E.K."/>
            <person name="Weissman J.S."/>
        </authorList>
    </citation>
    <scope>LEVEL OF PROTEIN EXPRESSION [LARGE SCALE ANALYSIS]</scope>
</reference>
<reference key="11">
    <citation type="journal article" date="2008" name="Mol. Cell. Proteomics">
        <title>A multidimensional chromatography technology for in-depth phosphoproteome analysis.</title>
        <authorList>
            <person name="Albuquerque C.P."/>
            <person name="Smolka M.B."/>
            <person name="Payne S.H."/>
            <person name="Bafna V."/>
            <person name="Eng J."/>
            <person name="Zhou H."/>
        </authorList>
    </citation>
    <scope>IDENTIFICATION BY MASS SPECTROMETRY [LARGE SCALE ANALYSIS]</scope>
</reference>
<reference key="12">
    <citation type="journal article" date="2008" name="Nat. Cell Biol.">
        <title>Inn1 couples contraction of the actomyosin ring to membrane ingression during cytokinesis in budding yeast.</title>
        <authorList>
            <person name="Sanchez-Diaz A."/>
            <person name="Marchesi V."/>
            <person name="Murray S."/>
            <person name="Jones R."/>
            <person name="Pereira G."/>
            <person name="Edmondson R."/>
            <person name="Allen T."/>
            <person name="Labib K."/>
        </authorList>
    </citation>
    <scope>SUBCELLULAR LOCATION</scope>
    <scope>FUNCTION</scope>
    <scope>INTERACTION WITH INN1</scope>
</reference>
<reference key="13">
    <citation type="journal article" date="2009" name="Science">
        <title>Global analysis of Cdk1 substrate phosphorylation sites provides insights into evolution.</title>
        <authorList>
            <person name="Holt L.J."/>
            <person name="Tuch B.B."/>
            <person name="Villen J."/>
            <person name="Johnson A.D."/>
            <person name="Gygi S.P."/>
            <person name="Morgan D.O."/>
        </authorList>
    </citation>
    <scope>PHOSPHORYLATION [LARGE SCALE ANALYSIS] AT THR-264; SER-268 AND THR-299</scope>
    <scope>IDENTIFICATION BY MASS SPECTROMETRY [LARGE SCALE ANALYSIS]</scope>
</reference>
<organism>
    <name type="scientific">Saccharomyces cerevisiae (strain ATCC 204508 / S288c)</name>
    <name type="common">Baker's yeast</name>
    <dbReference type="NCBI Taxonomy" id="559292"/>
    <lineage>
        <taxon>Eukaryota</taxon>
        <taxon>Fungi</taxon>
        <taxon>Dikarya</taxon>
        <taxon>Ascomycota</taxon>
        <taxon>Saccharomycotina</taxon>
        <taxon>Saccharomycetes</taxon>
        <taxon>Saccharomycetales</taxon>
        <taxon>Saccharomycetaceae</taxon>
        <taxon>Saccharomyces</taxon>
    </lineage>
</organism>
<dbReference type="EMBL" id="AF019644">
    <property type="protein sequence ID" value="AAB70827.1"/>
    <property type="molecule type" value="Genomic_DNA"/>
</dbReference>
<dbReference type="EMBL" id="Z73598">
    <property type="protein sequence ID" value="CAA97963.1"/>
    <property type="molecule type" value="Genomic_DNA"/>
</dbReference>
<dbReference type="EMBL" id="Z67751">
    <property type="protein sequence ID" value="CAA91603.1"/>
    <property type="molecule type" value="Genomic_DNA"/>
</dbReference>
<dbReference type="EMBL" id="BK006949">
    <property type="protein sequence ID" value="DAA11195.1"/>
    <property type="molecule type" value="Genomic_DNA"/>
</dbReference>
<dbReference type="PIR" id="S61023">
    <property type="entry name" value="S61023"/>
</dbReference>
<dbReference type="RefSeq" id="NP_015082.1">
    <property type="nucleotide sequence ID" value="NM_001184056.1"/>
</dbReference>
<dbReference type="SMR" id="Q12280"/>
<dbReference type="BioGRID" id="35921">
    <property type="interactions" value="103"/>
</dbReference>
<dbReference type="ComplexPortal" id="CPX-3503">
    <property type="entry name" value="MIH complex"/>
</dbReference>
<dbReference type="DIP" id="DIP-1144N"/>
<dbReference type="FunCoup" id="Q12280">
    <property type="interactions" value="457"/>
</dbReference>
<dbReference type="IntAct" id="Q12280">
    <property type="interactions" value="12"/>
</dbReference>
<dbReference type="MINT" id="Q12280"/>
<dbReference type="STRING" id="4932.YPL242C"/>
<dbReference type="GlyGen" id="Q12280">
    <property type="glycosylation" value="1 site"/>
</dbReference>
<dbReference type="iPTMnet" id="Q12280"/>
<dbReference type="PaxDb" id="4932-YPL242C"/>
<dbReference type="PeptideAtlas" id="Q12280"/>
<dbReference type="TopDownProteomics" id="Q12280"/>
<dbReference type="EnsemblFungi" id="YPL242C_mRNA">
    <property type="protein sequence ID" value="YPL242C"/>
    <property type="gene ID" value="YPL242C"/>
</dbReference>
<dbReference type="GeneID" id="855834"/>
<dbReference type="KEGG" id="sce:YPL242C"/>
<dbReference type="AGR" id="SGD:S000006163"/>
<dbReference type="SGD" id="S000006163">
    <property type="gene designation" value="IQG1"/>
</dbReference>
<dbReference type="VEuPathDB" id="FungiDB:YPL242C"/>
<dbReference type="eggNOG" id="KOG2128">
    <property type="taxonomic scope" value="Eukaryota"/>
</dbReference>
<dbReference type="GeneTree" id="ENSGT00950000183076"/>
<dbReference type="HOGENOM" id="CLU_000972_1_0_1"/>
<dbReference type="InParanoid" id="Q12280"/>
<dbReference type="OMA" id="KGVLVHW"/>
<dbReference type="OrthoDB" id="775356at2759"/>
<dbReference type="BioCyc" id="YEAST:G3O-34128-MONOMER"/>
<dbReference type="Reactome" id="R-SCE-5626467">
    <property type="pathway name" value="RHO GTPases activate IQGAPs"/>
</dbReference>
<dbReference type="Reactome" id="R-SCE-6798695">
    <property type="pathway name" value="Neutrophil degranulation"/>
</dbReference>
<dbReference type="Reactome" id="R-SCE-8980692">
    <property type="pathway name" value="RHOA GTPase cycle"/>
</dbReference>
<dbReference type="Reactome" id="R-SCE-9013026">
    <property type="pathway name" value="RHOB GTPase cycle"/>
</dbReference>
<dbReference type="Reactome" id="R-SCE-9013106">
    <property type="pathway name" value="RHOC GTPase cycle"/>
</dbReference>
<dbReference type="Reactome" id="R-SCE-9013406">
    <property type="pathway name" value="RHOQ GTPase cycle"/>
</dbReference>
<dbReference type="Reactome" id="R-SCE-9013420">
    <property type="pathway name" value="RHOU GTPase cycle"/>
</dbReference>
<dbReference type="Reactome" id="R-SCE-9013424">
    <property type="pathway name" value="RHOV GTPase cycle"/>
</dbReference>
<dbReference type="BioGRID-ORCS" id="855834">
    <property type="hits" value="0 hits in 10 CRISPR screens"/>
</dbReference>
<dbReference type="PRO" id="PR:Q12280"/>
<dbReference type="Proteomes" id="UP000002311">
    <property type="component" value="Chromosome XVI"/>
</dbReference>
<dbReference type="RNAct" id="Q12280">
    <property type="molecule type" value="protein"/>
</dbReference>
<dbReference type="GO" id="GO:0005938">
    <property type="term" value="C:cell cortex"/>
    <property type="evidence" value="ECO:0000318"/>
    <property type="project" value="GO_Central"/>
</dbReference>
<dbReference type="GO" id="GO:0005935">
    <property type="term" value="C:cellular bud neck"/>
    <property type="evidence" value="ECO:0000314"/>
    <property type="project" value="SGD"/>
</dbReference>
<dbReference type="GO" id="GO:0000142">
    <property type="term" value="C:cellular bud neck contractile ring"/>
    <property type="evidence" value="ECO:0000314"/>
    <property type="project" value="SGD"/>
</dbReference>
<dbReference type="GO" id="GO:0005737">
    <property type="term" value="C:cytoplasm"/>
    <property type="evidence" value="ECO:0007005"/>
    <property type="project" value="SGD"/>
</dbReference>
<dbReference type="GO" id="GO:0120155">
    <property type="term" value="C:MIH complex"/>
    <property type="evidence" value="ECO:0000314"/>
    <property type="project" value="SGD"/>
</dbReference>
<dbReference type="GO" id="GO:0110085">
    <property type="term" value="C:mitotic actomyosin contractile ring"/>
    <property type="evidence" value="ECO:0000318"/>
    <property type="project" value="GO_Central"/>
</dbReference>
<dbReference type="GO" id="GO:0005886">
    <property type="term" value="C:plasma membrane"/>
    <property type="evidence" value="ECO:0000303"/>
    <property type="project" value="ComplexPortal"/>
</dbReference>
<dbReference type="GO" id="GO:0051015">
    <property type="term" value="F:actin filament binding"/>
    <property type="evidence" value="ECO:0000314"/>
    <property type="project" value="SGD"/>
</dbReference>
<dbReference type="GO" id="GO:0005516">
    <property type="term" value="F:calmodulin binding"/>
    <property type="evidence" value="ECO:0000353"/>
    <property type="project" value="SGD"/>
</dbReference>
<dbReference type="GO" id="GO:0005096">
    <property type="term" value="F:GTPase activator activity"/>
    <property type="evidence" value="ECO:0000318"/>
    <property type="project" value="GO_Central"/>
</dbReference>
<dbReference type="GO" id="GO:0032038">
    <property type="term" value="F:myosin II heavy chain binding"/>
    <property type="evidence" value="ECO:0000353"/>
    <property type="project" value="SGD"/>
</dbReference>
<dbReference type="GO" id="GO:0032033">
    <property type="term" value="F:myosin II light chain binding"/>
    <property type="evidence" value="ECO:0000353"/>
    <property type="project" value="SGD"/>
</dbReference>
<dbReference type="GO" id="GO:0032027">
    <property type="term" value="F:myosin light chain binding"/>
    <property type="evidence" value="ECO:0000353"/>
    <property type="project" value="SGD"/>
</dbReference>
<dbReference type="GO" id="GO:1903475">
    <property type="term" value="P:mitotic actomyosin contractile ring assembly"/>
    <property type="evidence" value="ECO:0000315"/>
    <property type="project" value="SGD"/>
</dbReference>
<dbReference type="GO" id="GO:1903479">
    <property type="term" value="P:mitotic actomyosin contractile ring assembly actin filament organization"/>
    <property type="evidence" value="ECO:0000315"/>
    <property type="project" value="SGD"/>
</dbReference>
<dbReference type="GO" id="GO:0000281">
    <property type="term" value="P:mitotic cytokinesis"/>
    <property type="evidence" value="ECO:0000315"/>
    <property type="project" value="SGD"/>
</dbReference>
<dbReference type="GO" id="GO:0072741">
    <property type="term" value="P:protein localization to cell division site"/>
    <property type="evidence" value="ECO:0000315"/>
    <property type="project" value="SGD"/>
</dbReference>
<dbReference type="GO" id="GO:0031991">
    <property type="term" value="P:regulation of actomyosin contractile ring contraction"/>
    <property type="evidence" value="ECO:0000303"/>
    <property type="project" value="ComplexPortal"/>
</dbReference>
<dbReference type="GO" id="GO:1903338">
    <property type="term" value="P:regulation of cell wall organization or biogenesis"/>
    <property type="evidence" value="ECO:0000303"/>
    <property type="project" value="ComplexPortal"/>
</dbReference>
<dbReference type="GO" id="GO:0032465">
    <property type="term" value="P:regulation of cytokinesis"/>
    <property type="evidence" value="ECO:0000303"/>
    <property type="project" value="ComplexPortal"/>
</dbReference>
<dbReference type="GO" id="GO:1903471">
    <property type="term" value="P:regulation of mitotic actomyosin contractile ring contraction"/>
    <property type="evidence" value="ECO:0000315"/>
    <property type="project" value="SGD"/>
</dbReference>
<dbReference type="CDD" id="cd21206">
    <property type="entry name" value="CH_IQGAP"/>
    <property type="match status" value="1"/>
</dbReference>
<dbReference type="CDD" id="cd12206">
    <property type="entry name" value="RasGAP_IQGAP_related"/>
    <property type="match status" value="1"/>
</dbReference>
<dbReference type="FunFam" id="1.10.418.10:FF:000113">
    <property type="entry name" value="Ras GTPase-activating-like protein IQG1"/>
    <property type="match status" value="1"/>
</dbReference>
<dbReference type="Gene3D" id="1.10.418.10">
    <property type="entry name" value="Calponin-like domain"/>
    <property type="match status" value="1"/>
</dbReference>
<dbReference type="Gene3D" id="1.10.506.10">
    <property type="entry name" value="GTPase Activation - p120gap, domain 1"/>
    <property type="match status" value="1"/>
</dbReference>
<dbReference type="InterPro" id="IPR001715">
    <property type="entry name" value="CH_dom"/>
</dbReference>
<dbReference type="InterPro" id="IPR036872">
    <property type="entry name" value="CH_dom_sf"/>
</dbReference>
<dbReference type="InterPro" id="IPR000048">
    <property type="entry name" value="IQ_motif_EF-hand-BS"/>
</dbReference>
<dbReference type="InterPro" id="IPR000593">
    <property type="entry name" value="RasGAP_C"/>
</dbReference>
<dbReference type="InterPro" id="IPR001936">
    <property type="entry name" value="RasGAP_dom"/>
</dbReference>
<dbReference type="InterPro" id="IPR008936">
    <property type="entry name" value="Rho_GTPase_activation_prot"/>
</dbReference>
<dbReference type="PANTHER" id="PTHR14149:SF14">
    <property type="entry name" value="CALPONIN-HOMOLOGY (CH) DOMAIN-CONTAINING PROTEIN"/>
    <property type="match status" value="1"/>
</dbReference>
<dbReference type="PANTHER" id="PTHR14149">
    <property type="entry name" value="RAS GTPASE-ACTIVATING PROTEIN WITH IQ MOTIF"/>
    <property type="match status" value="1"/>
</dbReference>
<dbReference type="Pfam" id="PF00307">
    <property type="entry name" value="CH"/>
    <property type="match status" value="1"/>
</dbReference>
<dbReference type="Pfam" id="PF00612">
    <property type="entry name" value="IQ"/>
    <property type="match status" value="1"/>
</dbReference>
<dbReference type="Pfam" id="PF00616">
    <property type="entry name" value="RasGAP"/>
    <property type="match status" value="1"/>
</dbReference>
<dbReference type="Pfam" id="PF03836">
    <property type="entry name" value="RasGAP_C"/>
    <property type="match status" value="1"/>
</dbReference>
<dbReference type="SMART" id="SM00033">
    <property type="entry name" value="CH"/>
    <property type="match status" value="1"/>
</dbReference>
<dbReference type="SUPFAM" id="SSF47576">
    <property type="entry name" value="Calponin-homology domain, CH-domain"/>
    <property type="match status" value="1"/>
</dbReference>
<dbReference type="SUPFAM" id="SSF48350">
    <property type="entry name" value="GTPase activation domain, GAP"/>
    <property type="match status" value="1"/>
</dbReference>
<dbReference type="PROSITE" id="PS50021">
    <property type="entry name" value="CH"/>
    <property type="match status" value="1"/>
</dbReference>
<dbReference type="PROSITE" id="PS50018">
    <property type="entry name" value="RAS_GTPASE_ACTIV_2"/>
    <property type="match status" value="1"/>
</dbReference>
<name>IQG1_YEAST</name>
<evidence type="ECO:0000250" key="1">
    <source>
        <dbReference type="UniProtKB" id="Q5AH02"/>
    </source>
</evidence>
<evidence type="ECO:0000255" key="2"/>
<evidence type="ECO:0000255" key="3">
    <source>
        <dbReference type="PROSITE-ProRule" id="PRU00044"/>
    </source>
</evidence>
<evidence type="ECO:0000255" key="4">
    <source>
        <dbReference type="PROSITE-ProRule" id="PRU00167"/>
    </source>
</evidence>
<evidence type="ECO:0000269" key="5">
    <source>
    </source>
</evidence>
<evidence type="ECO:0000269" key="6">
    <source>
    </source>
</evidence>
<evidence type="ECO:0000269" key="7">
    <source>
    </source>
</evidence>
<evidence type="ECO:0000269" key="8">
    <source>
    </source>
</evidence>
<evidence type="ECO:0000269" key="9">
    <source>
    </source>
</evidence>
<evidence type="ECO:0000269" key="10">
    <source>
    </source>
</evidence>
<evidence type="ECO:0000269" key="11">
    <source>
    </source>
</evidence>
<evidence type="ECO:0000269" key="12">
    <source>
    </source>
</evidence>
<evidence type="ECO:0000269" key="13">
    <source>
    </source>
</evidence>
<evidence type="ECO:0007744" key="14">
    <source>
    </source>
</evidence>